<gene>
    <name type="ordered locus">MIMI_R595</name>
</gene>
<keyword id="KW-0325">Glycoprotein</keyword>
<keyword id="KW-0472">Membrane</keyword>
<keyword id="KW-1185">Reference proteome</keyword>
<keyword id="KW-0812">Transmembrane</keyword>
<keyword id="KW-1133">Transmembrane helix</keyword>
<protein>
    <recommendedName>
        <fullName>Uncharacterized protein R595</fullName>
    </recommendedName>
</protein>
<organismHost>
    <name type="scientific">Acanthamoeba polyphaga</name>
    <name type="common">Amoeba</name>
    <dbReference type="NCBI Taxonomy" id="5757"/>
</organismHost>
<feature type="chain" id="PRO_0000253424" description="Uncharacterized protein R595">
    <location>
        <begin position="1"/>
        <end position="294"/>
    </location>
</feature>
<feature type="transmembrane region" description="Helical" evidence="1">
    <location>
        <begin position="5"/>
        <end position="25"/>
    </location>
</feature>
<feature type="glycosylation site" description="N-linked (GlcNAc...) asparagine; by host" evidence="1">
    <location>
        <position position="151"/>
    </location>
</feature>
<feature type="glycosylation site" description="N-linked (GlcNAc...) asparagine; by host" evidence="1">
    <location>
        <position position="170"/>
    </location>
</feature>
<feature type="glycosylation site" description="N-linked (GlcNAc...) asparagine; by host" evidence="1">
    <location>
        <position position="205"/>
    </location>
</feature>
<feature type="glycosylation site" description="N-linked (GlcNAc...) asparagine; by host" evidence="1">
    <location>
        <position position="271"/>
    </location>
</feature>
<proteinExistence type="predicted"/>
<sequence length="294" mass="34159">MYKKILIILIIIIIVIISLIYLKNFILYQPHKDHPVKYCKFFHKLSKLTEPENIHHLYLKTPDNILLDTIVIRNTDTNKCIIYFHGNAGNIAMRYNIIKFLFNYASVIVFDYRSFGRSTGSFITMNQQDLSTDAETIWNYVIKNLHYNPNNISLFGESLGCSVAINLAVNISKNFDSKYYPHSLILNSPFYSLSEMVKSIFHKANLSQFGSVLSNLFREYQSDKLIPFMNQHTKIIIAHSHNDEIIPFEQGFKLYQLIANTHTNSKFIIINGSHNNPGLPDEYIYTLADLFNDW</sequence>
<accession>Q5UP55</accession>
<reference key="1">
    <citation type="journal article" date="2004" name="Science">
        <title>The 1.2-megabase genome sequence of Mimivirus.</title>
        <authorList>
            <person name="Raoult D."/>
            <person name="Audic S."/>
            <person name="Robert C."/>
            <person name="Abergel C."/>
            <person name="Renesto P."/>
            <person name="Ogata H."/>
            <person name="La Scola B."/>
            <person name="Susan M."/>
            <person name="Claverie J.-M."/>
        </authorList>
    </citation>
    <scope>NUCLEOTIDE SEQUENCE [LARGE SCALE GENOMIC DNA]</scope>
    <source>
        <strain>Rowbotham-Bradford</strain>
    </source>
</reference>
<evidence type="ECO:0000255" key="1"/>
<evidence type="ECO:0000305" key="2"/>
<name>YR595_MIMIV</name>
<dbReference type="EMBL" id="AY653733">
    <property type="protein sequence ID" value="AAV50858.1"/>
    <property type="molecule type" value="Genomic_DNA"/>
</dbReference>
<dbReference type="SMR" id="Q5UP55"/>
<dbReference type="ESTHER" id="mimiv-yr595">
    <property type="family name" value="ABHD13-BEM46"/>
</dbReference>
<dbReference type="KEGG" id="vg:9925231"/>
<dbReference type="OrthoDB" id="12547at10239"/>
<dbReference type="Proteomes" id="UP000001134">
    <property type="component" value="Genome"/>
</dbReference>
<dbReference type="GO" id="GO:0016020">
    <property type="term" value="C:membrane"/>
    <property type="evidence" value="ECO:0007669"/>
    <property type="project" value="UniProtKB-SubCell"/>
</dbReference>
<dbReference type="Gene3D" id="3.40.50.1820">
    <property type="entry name" value="alpha/beta hydrolase"/>
    <property type="match status" value="1"/>
</dbReference>
<dbReference type="InterPro" id="IPR029058">
    <property type="entry name" value="AB_hydrolase_fold"/>
</dbReference>
<dbReference type="InterPro" id="IPR022742">
    <property type="entry name" value="Hydrolase_4"/>
</dbReference>
<dbReference type="PANTHER" id="PTHR12277">
    <property type="entry name" value="ALPHA/BETA HYDROLASE DOMAIN-CONTAINING PROTEIN"/>
    <property type="match status" value="1"/>
</dbReference>
<dbReference type="PANTHER" id="PTHR12277:SF81">
    <property type="entry name" value="PROTEIN ABHD13"/>
    <property type="match status" value="1"/>
</dbReference>
<dbReference type="Pfam" id="PF12146">
    <property type="entry name" value="Hydrolase_4"/>
    <property type="match status" value="1"/>
</dbReference>
<dbReference type="SUPFAM" id="SSF53474">
    <property type="entry name" value="alpha/beta-Hydrolases"/>
    <property type="match status" value="1"/>
</dbReference>
<organism>
    <name type="scientific">Acanthamoeba polyphaga mimivirus</name>
    <name type="common">APMV</name>
    <dbReference type="NCBI Taxonomy" id="212035"/>
    <lineage>
        <taxon>Viruses</taxon>
        <taxon>Varidnaviria</taxon>
        <taxon>Bamfordvirae</taxon>
        <taxon>Nucleocytoviricota</taxon>
        <taxon>Megaviricetes</taxon>
        <taxon>Imitervirales</taxon>
        <taxon>Mimiviridae</taxon>
        <taxon>Megamimivirinae</taxon>
        <taxon>Mimivirus</taxon>
        <taxon>Mimivirus bradfordmassiliense</taxon>
    </lineage>
</organism>
<comment type="subcellular location">
    <subcellularLocation>
        <location evidence="2">Membrane</location>
        <topology evidence="2">Single-pass membrane protein</topology>
    </subcellularLocation>
</comment>